<evidence type="ECO:0000255" key="1">
    <source>
        <dbReference type="HAMAP-Rule" id="MF_00389"/>
    </source>
</evidence>
<proteinExistence type="inferred from homology"/>
<comment type="function">
    <text evidence="1">Part of a sulfur-relay system required for 2-thiolation of 5-methylaminomethyl-2-thiouridine (mnm(5)s(2)U) at tRNA wobble positions.</text>
</comment>
<comment type="subunit">
    <text evidence="1">Heterohexamer, formed by a dimer of trimers. The hexameric TusBCD complex contains 2 copies each of TusB, TusC and TusD. The TusBCD complex interacts with TusE.</text>
</comment>
<comment type="subcellular location">
    <subcellularLocation>
        <location evidence="1">Cytoplasm</location>
    </subcellularLocation>
</comment>
<comment type="similarity">
    <text evidence="1">Belongs to the DsrF/TusC family.</text>
</comment>
<feature type="chain" id="PRO_0000234455" description="Protein TusC">
    <location>
        <begin position="1"/>
        <end position="118"/>
    </location>
</feature>
<accession>Q5PN21</accession>
<organism>
    <name type="scientific">Salmonella paratyphi A (strain ATCC 9150 / SARB42)</name>
    <dbReference type="NCBI Taxonomy" id="295319"/>
    <lineage>
        <taxon>Bacteria</taxon>
        <taxon>Pseudomonadati</taxon>
        <taxon>Pseudomonadota</taxon>
        <taxon>Gammaproteobacteria</taxon>
        <taxon>Enterobacterales</taxon>
        <taxon>Enterobacteriaceae</taxon>
        <taxon>Salmonella</taxon>
    </lineage>
</organism>
<gene>
    <name evidence="1" type="primary">tusC</name>
    <name type="ordered locus">SPA3316</name>
</gene>
<dbReference type="EMBL" id="CP000026">
    <property type="protein sequence ID" value="AAV79132.1"/>
    <property type="molecule type" value="Genomic_DNA"/>
</dbReference>
<dbReference type="RefSeq" id="WP_000820707.1">
    <property type="nucleotide sequence ID" value="NC_006511.1"/>
</dbReference>
<dbReference type="SMR" id="Q5PN21"/>
<dbReference type="KEGG" id="spt:SPA3316"/>
<dbReference type="HOGENOM" id="CLU_155943_1_0_6"/>
<dbReference type="Proteomes" id="UP000008185">
    <property type="component" value="Chromosome"/>
</dbReference>
<dbReference type="GO" id="GO:0005737">
    <property type="term" value="C:cytoplasm"/>
    <property type="evidence" value="ECO:0007669"/>
    <property type="project" value="UniProtKB-SubCell"/>
</dbReference>
<dbReference type="GO" id="GO:0008033">
    <property type="term" value="P:tRNA processing"/>
    <property type="evidence" value="ECO:0007669"/>
    <property type="project" value="UniProtKB-UniRule"/>
</dbReference>
<dbReference type="Gene3D" id="3.40.1260.10">
    <property type="entry name" value="DsrEFH-like"/>
    <property type="match status" value="1"/>
</dbReference>
<dbReference type="HAMAP" id="MF_00389">
    <property type="entry name" value="Thiourid_synth_C"/>
    <property type="match status" value="1"/>
</dbReference>
<dbReference type="InterPro" id="IPR027396">
    <property type="entry name" value="DsrEFH-like"/>
</dbReference>
<dbReference type="InterPro" id="IPR003787">
    <property type="entry name" value="Sulphur_relay_DsrE/F-like"/>
</dbReference>
<dbReference type="InterPro" id="IPR037450">
    <property type="entry name" value="Sulphur_relay_TusC"/>
</dbReference>
<dbReference type="InterPro" id="IPR017462">
    <property type="entry name" value="Sulphur_relay_TusC/DsrF"/>
</dbReference>
<dbReference type="NCBIfam" id="NF001238">
    <property type="entry name" value="PRK00211.1"/>
    <property type="match status" value="1"/>
</dbReference>
<dbReference type="NCBIfam" id="TIGR03010">
    <property type="entry name" value="sulf_tusC_dsrF"/>
    <property type="match status" value="1"/>
</dbReference>
<dbReference type="PANTHER" id="PTHR38780">
    <property type="entry name" value="PROTEIN TUSC"/>
    <property type="match status" value="1"/>
</dbReference>
<dbReference type="PANTHER" id="PTHR38780:SF1">
    <property type="entry name" value="PROTEIN TUSC"/>
    <property type="match status" value="1"/>
</dbReference>
<dbReference type="Pfam" id="PF02635">
    <property type="entry name" value="DsrE"/>
    <property type="match status" value="1"/>
</dbReference>
<dbReference type="SUPFAM" id="SSF75169">
    <property type="entry name" value="DsrEFH-like"/>
    <property type="match status" value="1"/>
</dbReference>
<keyword id="KW-0963">Cytoplasm</keyword>
<keyword id="KW-0819">tRNA processing</keyword>
<reference key="1">
    <citation type="journal article" date="2004" name="Nat. Genet.">
        <title>Comparison of genome degradation in Paratyphi A and Typhi, human-restricted serovars of Salmonella enterica that cause typhoid.</title>
        <authorList>
            <person name="McClelland M."/>
            <person name="Sanderson K.E."/>
            <person name="Clifton S.W."/>
            <person name="Latreille P."/>
            <person name="Porwollik S."/>
            <person name="Sabo A."/>
            <person name="Meyer R."/>
            <person name="Bieri T."/>
            <person name="Ozersky P."/>
            <person name="McLellan M."/>
            <person name="Harkins C.R."/>
            <person name="Wang C."/>
            <person name="Nguyen C."/>
            <person name="Berghoff A."/>
            <person name="Elliott G."/>
            <person name="Kohlberg S."/>
            <person name="Strong C."/>
            <person name="Du F."/>
            <person name="Carter J."/>
            <person name="Kremizki C."/>
            <person name="Layman D."/>
            <person name="Leonard S."/>
            <person name="Sun H."/>
            <person name="Fulton L."/>
            <person name="Nash W."/>
            <person name="Miner T."/>
            <person name="Minx P."/>
            <person name="Delehaunty K."/>
            <person name="Fronick C."/>
            <person name="Magrini V."/>
            <person name="Nhan M."/>
            <person name="Warren W."/>
            <person name="Florea L."/>
            <person name="Spieth J."/>
            <person name="Wilson R.K."/>
        </authorList>
    </citation>
    <scope>NUCLEOTIDE SEQUENCE [LARGE SCALE GENOMIC DNA]</scope>
    <source>
        <strain>ATCC 9150 / SARB42</strain>
    </source>
</reference>
<sequence>MKRIAFVFSTAPHGSASGREGLDALLATSALTEALGVFFISDGVFQLLPGQKPDAVLARDYIATFKLFDLYDIDQCWICAASLRERGLENVNFVVNATPLEPVALRRELGNYDVILRF</sequence>
<protein>
    <recommendedName>
        <fullName evidence="1">Protein TusC</fullName>
    </recommendedName>
    <alternativeName>
        <fullName evidence="1">tRNA 2-thiouridine synthesizing protein C</fullName>
    </alternativeName>
</protein>
<name>TUSC_SALPA</name>